<proteinExistence type="inferred from homology"/>
<evidence type="ECO:0000255" key="1">
    <source>
        <dbReference type="HAMAP-Rule" id="MF_01345"/>
    </source>
</evidence>
<evidence type="ECO:0000305" key="2"/>
<accession>A0KRN3</accession>
<comment type="function">
    <text evidence="1">One of the primary rRNA binding proteins, it binds specifically to the 5'-end of 16S ribosomal RNA.</text>
</comment>
<comment type="subunit">
    <text evidence="1">Part of the 30S ribosomal subunit.</text>
</comment>
<comment type="similarity">
    <text evidence="1">Belongs to the universal ribosomal protein uS17 family.</text>
</comment>
<name>RS17_SHESA</name>
<feature type="chain" id="PRO_1000055022" description="Small ribosomal subunit protein uS17">
    <location>
        <begin position="1"/>
        <end position="82"/>
    </location>
</feature>
<organism>
    <name type="scientific">Shewanella sp. (strain ANA-3)</name>
    <dbReference type="NCBI Taxonomy" id="94122"/>
    <lineage>
        <taxon>Bacteria</taxon>
        <taxon>Pseudomonadati</taxon>
        <taxon>Pseudomonadota</taxon>
        <taxon>Gammaproteobacteria</taxon>
        <taxon>Alteromonadales</taxon>
        <taxon>Shewanellaceae</taxon>
        <taxon>Shewanella</taxon>
    </lineage>
</organism>
<protein>
    <recommendedName>
        <fullName evidence="1">Small ribosomal subunit protein uS17</fullName>
    </recommendedName>
    <alternativeName>
        <fullName evidence="2">30S ribosomal protein S17</fullName>
    </alternativeName>
</protein>
<gene>
    <name evidence="1" type="primary">rpsQ</name>
    <name type="ordered locus">Shewana3_0208</name>
</gene>
<sequence>MSDKIRTLQGRVTSNKMDKTITVAIERQVKHPIYGKYIKRTTKIHAHDEANQCNEGDVVAIRECRPLSKTKSWTLVEVVSKA</sequence>
<dbReference type="EMBL" id="CP000469">
    <property type="protein sequence ID" value="ABK46452.1"/>
    <property type="molecule type" value="Genomic_DNA"/>
</dbReference>
<dbReference type="RefSeq" id="WP_011070622.1">
    <property type="nucleotide sequence ID" value="NC_008577.1"/>
</dbReference>
<dbReference type="SMR" id="A0KRN3"/>
<dbReference type="STRING" id="94122.Shewana3_0208"/>
<dbReference type="GeneID" id="94726195"/>
<dbReference type="KEGG" id="shn:Shewana3_0208"/>
<dbReference type="eggNOG" id="COG0186">
    <property type="taxonomic scope" value="Bacteria"/>
</dbReference>
<dbReference type="HOGENOM" id="CLU_073626_1_1_6"/>
<dbReference type="OrthoDB" id="9811714at2"/>
<dbReference type="Proteomes" id="UP000002589">
    <property type="component" value="Chromosome"/>
</dbReference>
<dbReference type="GO" id="GO:0022627">
    <property type="term" value="C:cytosolic small ribosomal subunit"/>
    <property type="evidence" value="ECO:0007669"/>
    <property type="project" value="TreeGrafter"/>
</dbReference>
<dbReference type="GO" id="GO:0019843">
    <property type="term" value="F:rRNA binding"/>
    <property type="evidence" value="ECO:0007669"/>
    <property type="project" value="UniProtKB-UniRule"/>
</dbReference>
<dbReference type="GO" id="GO:0003735">
    <property type="term" value="F:structural constituent of ribosome"/>
    <property type="evidence" value="ECO:0007669"/>
    <property type="project" value="InterPro"/>
</dbReference>
<dbReference type="GO" id="GO:0006412">
    <property type="term" value="P:translation"/>
    <property type="evidence" value="ECO:0007669"/>
    <property type="project" value="UniProtKB-UniRule"/>
</dbReference>
<dbReference type="CDD" id="cd00364">
    <property type="entry name" value="Ribosomal_uS17"/>
    <property type="match status" value="1"/>
</dbReference>
<dbReference type="FunFam" id="2.40.50.140:FF:000014">
    <property type="entry name" value="30S ribosomal protein S17"/>
    <property type="match status" value="1"/>
</dbReference>
<dbReference type="Gene3D" id="2.40.50.140">
    <property type="entry name" value="Nucleic acid-binding proteins"/>
    <property type="match status" value="1"/>
</dbReference>
<dbReference type="HAMAP" id="MF_01345_B">
    <property type="entry name" value="Ribosomal_uS17_B"/>
    <property type="match status" value="1"/>
</dbReference>
<dbReference type="InterPro" id="IPR012340">
    <property type="entry name" value="NA-bd_OB-fold"/>
</dbReference>
<dbReference type="InterPro" id="IPR000266">
    <property type="entry name" value="Ribosomal_uS17"/>
</dbReference>
<dbReference type="InterPro" id="IPR019984">
    <property type="entry name" value="Ribosomal_uS17_bact/chlr"/>
</dbReference>
<dbReference type="InterPro" id="IPR019979">
    <property type="entry name" value="Ribosomal_uS17_CS"/>
</dbReference>
<dbReference type="NCBIfam" id="NF004123">
    <property type="entry name" value="PRK05610.1"/>
    <property type="match status" value="1"/>
</dbReference>
<dbReference type="NCBIfam" id="TIGR03635">
    <property type="entry name" value="uS17_bact"/>
    <property type="match status" value="1"/>
</dbReference>
<dbReference type="PANTHER" id="PTHR10744">
    <property type="entry name" value="40S RIBOSOMAL PROTEIN S11 FAMILY MEMBER"/>
    <property type="match status" value="1"/>
</dbReference>
<dbReference type="PANTHER" id="PTHR10744:SF1">
    <property type="entry name" value="SMALL RIBOSOMAL SUBUNIT PROTEIN US17M"/>
    <property type="match status" value="1"/>
</dbReference>
<dbReference type="Pfam" id="PF00366">
    <property type="entry name" value="Ribosomal_S17"/>
    <property type="match status" value="1"/>
</dbReference>
<dbReference type="PRINTS" id="PR00973">
    <property type="entry name" value="RIBOSOMALS17"/>
</dbReference>
<dbReference type="SUPFAM" id="SSF50249">
    <property type="entry name" value="Nucleic acid-binding proteins"/>
    <property type="match status" value="1"/>
</dbReference>
<dbReference type="PROSITE" id="PS00056">
    <property type="entry name" value="RIBOSOMAL_S17"/>
    <property type="match status" value="1"/>
</dbReference>
<reference key="1">
    <citation type="submission" date="2006-09" db="EMBL/GenBank/DDBJ databases">
        <title>Complete sequence of chromosome 1 of Shewanella sp. ANA-3.</title>
        <authorList>
            <person name="Copeland A."/>
            <person name="Lucas S."/>
            <person name="Lapidus A."/>
            <person name="Barry K."/>
            <person name="Detter J.C."/>
            <person name="Glavina del Rio T."/>
            <person name="Hammon N."/>
            <person name="Israni S."/>
            <person name="Dalin E."/>
            <person name="Tice H."/>
            <person name="Pitluck S."/>
            <person name="Chertkov O."/>
            <person name="Brettin T."/>
            <person name="Bruce D."/>
            <person name="Han C."/>
            <person name="Tapia R."/>
            <person name="Gilna P."/>
            <person name="Schmutz J."/>
            <person name="Larimer F."/>
            <person name="Land M."/>
            <person name="Hauser L."/>
            <person name="Kyrpides N."/>
            <person name="Kim E."/>
            <person name="Newman D."/>
            <person name="Salticov C."/>
            <person name="Konstantinidis K."/>
            <person name="Klappenback J."/>
            <person name="Tiedje J."/>
            <person name="Richardson P."/>
        </authorList>
    </citation>
    <scope>NUCLEOTIDE SEQUENCE [LARGE SCALE GENOMIC DNA]</scope>
    <source>
        <strain>ANA-3</strain>
    </source>
</reference>
<keyword id="KW-0687">Ribonucleoprotein</keyword>
<keyword id="KW-0689">Ribosomal protein</keyword>
<keyword id="KW-0694">RNA-binding</keyword>
<keyword id="KW-0699">rRNA-binding</keyword>